<name>RL13_RHILW</name>
<keyword id="KW-1185">Reference proteome</keyword>
<keyword id="KW-0687">Ribonucleoprotein</keyword>
<keyword id="KW-0689">Ribosomal protein</keyword>
<protein>
    <recommendedName>
        <fullName evidence="1">Large ribosomal subunit protein uL13</fullName>
    </recommendedName>
    <alternativeName>
        <fullName evidence="2">50S ribosomal protein L13</fullName>
    </alternativeName>
</protein>
<evidence type="ECO:0000255" key="1">
    <source>
        <dbReference type="HAMAP-Rule" id="MF_01366"/>
    </source>
</evidence>
<evidence type="ECO:0000305" key="2"/>
<proteinExistence type="inferred from homology"/>
<feature type="chain" id="PRO_1000144170" description="Large ribosomal subunit protein uL13">
    <location>
        <begin position="1"/>
        <end position="154"/>
    </location>
</feature>
<comment type="function">
    <text evidence="1">This protein is one of the early assembly proteins of the 50S ribosomal subunit, although it is not seen to bind rRNA by itself. It is important during the early stages of 50S assembly.</text>
</comment>
<comment type="subunit">
    <text evidence="1">Part of the 50S ribosomal subunit.</text>
</comment>
<comment type="similarity">
    <text evidence="1">Belongs to the universal ribosomal protein uL13 family.</text>
</comment>
<sequence>MATFSQKPAEVEKKWVIIDAEGLVVGRLASIIAMRLRGKHKATFTPHVDDGDNVIVINADKVVFTGKKYSDKVYYWHTGFAGGIKERTARQIIEGRFPERVLEKAVERMVPRGPLGRRQMKNLRVYAGSNHPHEAQQPVALDVAVLNKKNVRSA</sequence>
<accession>B5ZXZ6</accession>
<reference key="1">
    <citation type="journal article" date="2010" name="Stand. Genomic Sci.">
        <title>Complete genome sequence of Rhizobium leguminosarum bv trifolii strain WSM2304, an effective microsymbiont of the South American clover Trifolium polymorphum.</title>
        <authorList>
            <person name="Reeve W."/>
            <person name="O'Hara G."/>
            <person name="Chain P."/>
            <person name="Ardley J."/>
            <person name="Brau L."/>
            <person name="Nandesena K."/>
            <person name="Tiwari R."/>
            <person name="Malfatti S."/>
            <person name="Kiss H."/>
            <person name="Lapidus A."/>
            <person name="Copeland A."/>
            <person name="Nolan M."/>
            <person name="Land M."/>
            <person name="Ivanova N."/>
            <person name="Mavromatis K."/>
            <person name="Markowitz V."/>
            <person name="Kyrpides N."/>
            <person name="Melino V."/>
            <person name="Denton M."/>
            <person name="Yates R."/>
            <person name="Howieson J."/>
        </authorList>
    </citation>
    <scope>NUCLEOTIDE SEQUENCE [LARGE SCALE GENOMIC DNA]</scope>
    <source>
        <strain>WSM2304</strain>
    </source>
</reference>
<gene>
    <name evidence="1" type="primary">rplM</name>
    <name type="ordered locus">Rleg2_1235</name>
</gene>
<organism>
    <name type="scientific">Rhizobium leguminosarum bv. trifolii (strain WSM2304)</name>
    <dbReference type="NCBI Taxonomy" id="395492"/>
    <lineage>
        <taxon>Bacteria</taxon>
        <taxon>Pseudomonadati</taxon>
        <taxon>Pseudomonadota</taxon>
        <taxon>Alphaproteobacteria</taxon>
        <taxon>Hyphomicrobiales</taxon>
        <taxon>Rhizobiaceae</taxon>
        <taxon>Rhizobium/Agrobacterium group</taxon>
        <taxon>Rhizobium</taxon>
    </lineage>
</organism>
<dbReference type="EMBL" id="CP001191">
    <property type="protein sequence ID" value="ACI54529.1"/>
    <property type="molecule type" value="Genomic_DNA"/>
</dbReference>
<dbReference type="RefSeq" id="WP_003573970.1">
    <property type="nucleotide sequence ID" value="NC_011369.1"/>
</dbReference>
<dbReference type="SMR" id="B5ZXZ6"/>
<dbReference type="STRING" id="395492.Rleg2_1235"/>
<dbReference type="KEGG" id="rlt:Rleg2_1235"/>
<dbReference type="eggNOG" id="COG0102">
    <property type="taxonomic scope" value="Bacteria"/>
</dbReference>
<dbReference type="HOGENOM" id="CLU_082184_2_0_5"/>
<dbReference type="Proteomes" id="UP000008330">
    <property type="component" value="Chromosome"/>
</dbReference>
<dbReference type="GO" id="GO:0022625">
    <property type="term" value="C:cytosolic large ribosomal subunit"/>
    <property type="evidence" value="ECO:0007669"/>
    <property type="project" value="TreeGrafter"/>
</dbReference>
<dbReference type="GO" id="GO:0003729">
    <property type="term" value="F:mRNA binding"/>
    <property type="evidence" value="ECO:0007669"/>
    <property type="project" value="TreeGrafter"/>
</dbReference>
<dbReference type="GO" id="GO:0003735">
    <property type="term" value="F:structural constituent of ribosome"/>
    <property type="evidence" value="ECO:0007669"/>
    <property type="project" value="InterPro"/>
</dbReference>
<dbReference type="GO" id="GO:0017148">
    <property type="term" value="P:negative regulation of translation"/>
    <property type="evidence" value="ECO:0007669"/>
    <property type="project" value="TreeGrafter"/>
</dbReference>
<dbReference type="GO" id="GO:0006412">
    <property type="term" value="P:translation"/>
    <property type="evidence" value="ECO:0007669"/>
    <property type="project" value="UniProtKB-UniRule"/>
</dbReference>
<dbReference type="CDD" id="cd00392">
    <property type="entry name" value="Ribosomal_L13"/>
    <property type="match status" value="1"/>
</dbReference>
<dbReference type="FunFam" id="3.90.1180.10:FF:000001">
    <property type="entry name" value="50S ribosomal protein L13"/>
    <property type="match status" value="1"/>
</dbReference>
<dbReference type="Gene3D" id="3.90.1180.10">
    <property type="entry name" value="Ribosomal protein L13"/>
    <property type="match status" value="1"/>
</dbReference>
<dbReference type="HAMAP" id="MF_01366">
    <property type="entry name" value="Ribosomal_uL13"/>
    <property type="match status" value="1"/>
</dbReference>
<dbReference type="InterPro" id="IPR005822">
    <property type="entry name" value="Ribosomal_uL13"/>
</dbReference>
<dbReference type="InterPro" id="IPR005823">
    <property type="entry name" value="Ribosomal_uL13_bac-type"/>
</dbReference>
<dbReference type="InterPro" id="IPR036899">
    <property type="entry name" value="Ribosomal_uL13_sf"/>
</dbReference>
<dbReference type="NCBIfam" id="TIGR01066">
    <property type="entry name" value="rplM_bact"/>
    <property type="match status" value="1"/>
</dbReference>
<dbReference type="PANTHER" id="PTHR11545:SF2">
    <property type="entry name" value="LARGE RIBOSOMAL SUBUNIT PROTEIN UL13M"/>
    <property type="match status" value="1"/>
</dbReference>
<dbReference type="PANTHER" id="PTHR11545">
    <property type="entry name" value="RIBOSOMAL PROTEIN L13"/>
    <property type="match status" value="1"/>
</dbReference>
<dbReference type="Pfam" id="PF00572">
    <property type="entry name" value="Ribosomal_L13"/>
    <property type="match status" value="1"/>
</dbReference>
<dbReference type="PIRSF" id="PIRSF002181">
    <property type="entry name" value="Ribosomal_L13"/>
    <property type="match status" value="1"/>
</dbReference>
<dbReference type="SUPFAM" id="SSF52161">
    <property type="entry name" value="Ribosomal protein L13"/>
    <property type="match status" value="1"/>
</dbReference>